<dbReference type="EMBL" id="CP000886">
    <property type="protein sequence ID" value="ABX69607.1"/>
    <property type="molecule type" value="Genomic_DNA"/>
</dbReference>
<dbReference type="RefSeq" id="WP_001138042.1">
    <property type="nucleotide sequence ID" value="NC_010102.1"/>
</dbReference>
<dbReference type="SMR" id="A9MT07"/>
<dbReference type="GeneID" id="92804583"/>
<dbReference type="KEGG" id="spq:SPAB_04290"/>
<dbReference type="PATRIC" id="fig|1016998.12.peg.4036"/>
<dbReference type="HOGENOM" id="CLU_072226_1_1_6"/>
<dbReference type="BioCyc" id="SENT1016998:SPAB_RS17470-MONOMER"/>
<dbReference type="Proteomes" id="UP000008556">
    <property type="component" value="Chromosome"/>
</dbReference>
<dbReference type="GO" id="GO:0015935">
    <property type="term" value="C:small ribosomal subunit"/>
    <property type="evidence" value="ECO:0007669"/>
    <property type="project" value="InterPro"/>
</dbReference>
<dbReference type="GO" id="GO:0019843">
    <property type="term" value="F:rRNA binding"/>
    <property type="evidence" value="ECO:0007669"/>
    <property type="project" value="UniProtKB-UniRule"/>
</dbReference>
<dbReference type="GO" id="GO:0003735">
    <property type="term" value="F:structural constituent of ribosome"/>
    <property type="evidence" value="ECO:0007669"/>
    <property type="project" value="InterPro"/>
</dbReference>
<dbReference type="GO" id="GO:0000049">
    <property type="term" value="F:tRNA binding"/>
    <property type="evidence" value="ECO:0007669"/>
    <property type="project" value="UniProtKB-UniRule"/>
</dbReference>
<dbReference type="GO" id="GO:0006412">
    <property type="term" value="P:translation"/>
    <property type="evidence" value="ECO:0007669"/>
    <property type="project" value="UniProtKB-UniRule"/>
</dbReference>
<dbReference type="CDD" id="cd14869">
    <property type="entry name" value="uS7_Bacteria"/>
    <property type="match status" value="1"/>
</dbReference>
<dbReference type="FunFam" id="1.10.455.10:FF:000001">
    <property type="entry name" value="30S ribosomal protein S7"/>
    <property type="match status" value="1"/>
</dbReference>
<dbReference type="Gene3D" id="1.10.455.10">
    <property type="entry name" value="Ribosomal protein S7 domain"/>
    <property type="match status" value="1"/>
</dbReference>
<dbReference type="HAMAP" id="MF_00480_B">
    <property type="entry name" value="Ribosomal_uS7_B"/>
    <property type="match status" value="1"/>
</dbReference>
<dbReference type="InterPro" id="IPR000235">
    <property type="entry name" value="Ribosomal_uS7"/>
</dbReference>
<dbReference type="InterPro" id="IPR005717">
    <property type="entry name" value="Ribosomal_uS7_bac/org-type"/>
</dbReference>
<dbReference type="InterPro" id="IPR020606">
    <property type="entry name" value="Ribosomal_uS7_CS"/>
</dbReference>
<dbReference type="InterPro" id="IPR023798">
    <property type="entry name" value="Ribosomal_uS7_dom"/>
</dbReference>
<dbReference type="InterPro" id="IPR036823">
    <property type="entry name" value="Ribosomal_uS7_dom_sf"/>
</dbReference>
<dbReference type="NCBIfam" id="TIGR01029">
    <property type="entry name" value="rpsG_bact"/>
    <property type="match status" value="1"/>
</dbReference>
<dbReference type="PANTHER" id="PTHR11205">
    <property type="entry name" value="RIBOSOMAL PROTEIN S7"/>
    <property type="match status" value="1"/>
</dbReference>
<dbReference type="Pfam" id="PF00177">
    <property type="entry name" value="Ribosomal_S7"/>
    <property type="match status" value="1"/>
</dbReference>
<dbReference type="PIRSF" id="PIRSF002122">
    <property type="entry name" value="RPS7p_RPS7a_RPS5e_RPS7o"/>
    <property type="match status" value="1"/>
</dbReference>
<dbReference type="SUPFAM" id="SSF47973">
    <property type="entry name" value="Ribosomal protein S7"/>
    <property type="match status" value="1"/>
</dbReference>
<dbReference type="PROSITE" id="PS00052">
    <property type="entry name" value="RIBOSOMAL_S7"/>
    <property type="match status" value="1"/>
</dbReference>
<name>RS7_SALPB</name>
<gene>
    <name evidence="1" type="primary">rpsG</name>
    <name type="ordered locus">SPAB_04290</name>
</gene>
<keyword id="KW-0687">Ribonucleoprotein</keyword>
<keyword id="KW-0689">Ribosomal protein</keyword>
<keyword id="KW-0694">RNA-binding</keyword>
<keyword id="KW-0699">rRNA-binding</keyword>
<keyword id="KW-0820">tRNA-binding</keyword>
<feature type="chain" id="PRO_1000081300" description="Small ribosomal subunit protein uS7">
    <location>
        <begin position="1"/>
        <end position="156"/>
    </location>
</feature>
<protein>
    <recommendedName>
        <fullName evidence="1">Small ribosomal subunit protein uS7</fullName>
    </recommendedName>
    <alternativeName>
        <fullName evidence="2">30S ribosomal protein S7</fullName>
    </alternativeName>
</protein>
<reference key="1">
    <citation type="submission" date="2007-11" db="EMBL/GenBank/DDBJ databases">
        <authorList>
            <consortium name="The Salmonella enterica serovar Paratyphi B Genome Sequencing Project"/>
            <person name="McClelland M."/>
            <person name="Sanderson E.K."/>
            <person name="Porwollik S."/>
            <person name="Spieth J."/>
            <person name="Clifton W.S."/>
            <person name="Fulton R."/>
            <person name="Cordes M."/>
            <person name="Wollam A."/>
            <person name="Shah N."/>
            <person name="Pepin K."/>
            <person name="Bhonagiri V."/>
            <person name="Nash W."/>
            <person name="Johnson M."/>
            <person name="Thiruvilangam P."/>
            <person name="Wilson R."/>
        </authorList>
    </citation>
    <scope>NUCLEOTIDE SEQUENCE [LARGE SCALE GENOMIC DNA]</scope>
    <source>
        <strain>ATCC BAA-1250 / SPB7</strain>
    </source>
</reference>
<comment type="function">
    <text evidence="1">One of the primary rRNA binding proteins, it binds directly to 16S rRNA where it nucleates assembly of the head domain of the 30S subunit. Is located at the subunit interface close to the decoding center, probably blocks exit of the E-site tRNA.</text>
</comment>
<comment type="subunit">
    <text evidence="1">Part of the 30S ribosomal subunit. Contacts proteins S9 and S11.</text>
</comment>
<comment type="similarity">
    <text evidence="1">Belongs to the universal ribosomal protein uS7 family.</text>
</comment>
<evidence type="ECO:0000255" key="1">
    <source>
        <dbReference type="HAMAP-Rule" id="MF_00480"/>
    </source>
</evidence>
<evidence type="ECO:0000305" key="2"/>
<sequence length="156" mass="17590">MPRRRVIGQRKILPDPKFGSELLAKFVNILMVDGKKSTAESIVYSALETLAQRSGKSELEAFEVALENVRPTVEVKSRRVGGSTYQVPVEVRPVRRNALAMRWIVEAARKRGDKSMALRLANELSDAADNKGTAVKKREDVHRMAEANKAFAHYRW</sequence>
<organism>
    <name type="scientific">Salmonella paratyphi B (strain ATCC BAA-1250 / SPB7)</name>
    <dbReference type="NCBI Taxonomy" id="1016998"/>
    <lineage>
        <taxon>Bacteria</taxon>
        <taxon>Pseudomonadati</taxon>
        <taxon>Pseudomonadota</taxon>
        <taxon>Gammaproteobacteria</taxon>
        <taxon>Enterobacterales</taxon>
        <taxon>Enterobacteriaceae</taxon>
        <taxon>Salmonella</taxon>
    </lineage>
</organism>
<proteinExistence type="inferred from homology"/>
<accession>A9MT07</accession>